<gene>
    <name evidence="1" type="primary">csrA</name>
    <name type="ordered locus">SG0539</name>
</gene>
<organism>
    <name type="scientific">Sodalis glossinidius (strain morsitans)</name>
    <dbReference type="NCBI Taxonomy" id="343509"/>
    <lineage>
        <taxon>Bacteria</taxon>
        <taxon>Pseudomonadati</taxon>
        <taxon>Pseudomonadota</taxon>
        <taxon>Gammaproteobacteria</taxon>
        <taxon>Enterobacterales</taxon>
        <taxon>Bruguierivoracaceae</taxon>
        <taxon>Sodalis</taxon>
    </lineage>
</organism>
<name>CSRA_SODGM</name>
<reference key="1">
    <citation type="journal article" date="2006" name="Genome Res.">
        <title>Massive genome erosion and functional adaptations provide insights into the symbiotic lifestyle of Sodalis glossinidius in the tsetse host.</title>
        <authorList>
            <person name="Toh H."/>
            <person name="Weiss B.L."/>
            <person name="Perkin S.A.H."/>
            <person name="Yamashita A."/>
            <person name="Oshima K."/>
            <person name="Hattori M."/>
            <person name="Aksoy S."/>
        </authorList>
    </citation>
    <scope>NUCLEOTIDE SEQUENCE [LARGE SCALE GENOMIC DNA]</scope>
    <source>
        <strain>morsitans</strain>
    </source>
</reference>
<proteinExistence type="inferred from homology"/>
<sequence>MLILTRRVGETLMIGDEVTVTVLGVKGNQVRIGVNAPKEVSVHREEIYQRIQAEKSQQTPY</sequence>
<accession>Q2NVL1</accession>
<keyword id="KW-0010">Activator</keyword>
<keyword id="KW-0963">Cytoplasm</keyword>
<keyword id="KW-0678">Repressor</keyword>
<keyword id="KW-0694">RNA-binding</keyword>
<keyword id="KW-0810">Translation regulation</keyword>
<dbReference type="EMBL" id="AP008232">
    <property type="protein sequence ID" value="BAE73814.1"/>
    <property type="molecule type" value="Genomic_DNA"/>
</dbReference>
<dbReference type="RefSeq" id="WP_011410512.1">
    <property type="nucleotide sequence ID" value="NZ_LN854557.1"/>
</dbReference>
<dbReference type="SMR" id="Q2NVL1"/>
<dbReference type="STRING" id="343509.SG0539"/>
<dbReference type="KEGG" id="sgl:SG0539"/>
<dbReference type="eggNOG" id="COG1551">
    <property type="taxonomic scope" value="Bacteria"/>
</dbReference>
<dbReference type="HOGENOM" id="CLU_164837_2_1_6"/>
<dbReference type="OrthoDB" id="9809061at2"/>
<dbReference type="BioCyc" id="SGLO343509:SGP1_RS04770-MONOMER"/>
<dbReference type="Proteomes" id="UP000001932">
    <property type="component" value="Chromosome"/>
</dbReference>
<dbReference type="GO" id="GO:0005829">
    <property type="term" value="C:cytosol"/>
    <property type="evidence" value="ECO:0007669"/>
    <property type="project" value="TreeGrafter"/>
</dbReference>
<dbReference type="GO" id="GO:0048027">
    <property type="term" value="F:mRNA 5'-UTR binding"/>
    <property type="evidence" value="ECO:0007669"/>
    <property type="project" value="UniProtKB-UniRule"/>
</dbReference>
<dbReference type="GO" id="GO:0006402">
    <property type="term" value="P:mRNA catabolic process"/>
    <property type="evidence" value="ECO:0007669"/>
    <property type="project" value="InterPro"/>
</dbReference>
<dbReference type="GO" id="GO:0045947">
    <property type="term" value="P:negative regulation of translational initiation"/>
    <property type="evidence" value="ECO:0007669"/>
    <property type="project" value="UniProtKB-UniRule"/>
</dbReference>
<dbReference type="GO" id="GO:0045948">
    <property type="term" value="P:positive regulation of translational initiation"/>
    <property type="evidence" value="ECO:0007669"/>
    <property type="project" value="UniProtKB-UniRule"/>
</dbReference>
<dbReference type="GO" id="GO:0006109">
    <property type="term" value="P:regulation of carbohydrate metabolic process"/>
    <property type="evidence" value="ECO:0007669"/>
    <property type="project" value="UniProtKB-UniRule"/>
</dbReference>
<dbReference type="FunFam" id="2.60.40.4380:FF:000001">
    <property type="entry name" value="Translational regulator CsrA"/>
    <property type="match status" value="1"/>
</dbReference>
<dbReference type="Gene3D" id="2.60.40.4380">
    <property type="entry name" value="Translational regulator CsrA"/>
    <property type="match status" value="1"/>
</dbReference>
<dbReference type="HAMAP" id="MF_00167">
    <property type="entry name" value="CsrA"/>
    <property type="match status" value="1"/>
</dbReference>
<dbReference type="InterPro" id="IPR003751">
    <property type="entry name" value="CsrA"/>
</dbReference>
<dbReference type="InterPro" id="IPR036107">
    <property type="entry name" value="CsrA_sf"/>
</dbReference>
<dbReference type="NCBIfam" id="TIGR00202">
    <property type="entry name" value="csrA"/>
    <property type="match status" value="1"/>
</dbReference>
<dbReference type="NCBIfam" id="NF002469">
    <property type="entry name" value="PRK01712.1"/>
    <property type="match status" value="1"/>
</dbReference>
<dbReference type="PANTHER" id="PTHR34984">
    <property type="entry name" value="CARBON STORAGE REGULATOR"/>
    <property type="match status" value="1"/>
</dbReference>
<dbReference type="PANTHER" id="PTHR34984:SF1">
    <property type="entry name" value="CARBON STORAGE REGULATOR"/>
    <property type="match status" value="1"/>
</dbReference>
<dbReference type="Pfam" id="PF02599">
    <property type="entry name" value="CsrA"/>
    <property type="match status" value="1"/>
</dbReference>
<dbReference type="SUPFAM" id="SSF117130">
    <property type="entry name" value="CsrA-like"/>
    <property type="match status" value="1"/>
</dbReference>
<feature type="chain" id="PRO_1000023430" description="Translational regulator CsrA">
    <location>
        <begin position="1"/>
        <end position="61"/>
    </location>
</feature>
<evidence type="ECO:0000255" key="1">
    <source>
        <dbReference type="HAMAP-Rule" id="MF_00167"/>
    </source>
</evidence>
<protein>
    <recommendedName>
        <fullName evidence="1">Translational regulator CsrA</fullName>
    </recommendedName>
    <alternativeName>
        <fullName evidence="1">Carbon storage regulator</fullName>
    </alternativeName>
</protein>
<comment type="function">
    <text evidence="1">A key translational regulator that binds mRNA to regulate translation initiation and/or mRNA stability. Mediates global changes in gene expression, shifting from rapid growth to stress survival by linking envelope stress, the stringent response and the catabolite repression systems. Usually binds in the 5'-UTR; binding at or near the Shine-Dalgarno sequence prevents ribosome-binding, repressing translation, binding elsewhere in the 5'-UTR can activate translation and/or stabilize the mRNA. Its function is antagonized by small RNA(s).</text>
</comment>
<comment type="subunit">
    <text evidence="1">Homodimer; the beta-strands of each monomer intercalate to form a hydrophobic core, while the alpha-helices form wings that extend away from the core.</text>
</comment>
<comment type="subcellular location">
    <subcellularLocation>
        <location evidence="1">Cytoplasm</location>
    </subcellularLocation>
</comment>
<comment type="similarity">
    <text evidence="1">Belongs to the CsrA/RsmA family.</text>
</comment>